<protein>
    <recommendedName>
        <fullName evidence="12">Dehydrogenase/reductase SDR family member 6</fullName>
        <ecNumber evidence="15">1.1.1.-</ecNumber>
    </recommendedName>
    <alternativeName>
        <fullName evidence="12">(R)-beta-hydroxybutyrate dehydrogenase</fullName>
    </alternativeName>
    <alternativeName>
        <fullName>3-hydroxybutyrate dehydrogenase type 2</fullName>
        <ecNumber evidence="6">1.1.1.30</ecNumber>
    </alternativeName>
    <alternativeName>
        <fullName evidence="13">4-oxo-L-proline reductase</fullName>
        <ecNumber evidence="8">1.1.1.104</ecNumber>
    </alternativeName>
    <alternativeName>
        <fullName>Oxidoreductase UCPA</fullName>
    </alternativeName>
    <alternativeName>
        <fullName>Short chain dehydrogenase/reductase family 15C member 1</fullName>
    </alternativeName>
</protein>
<organism>
    <name type="scientific">Homo sapiens</name>
    <name type="common">Human</name>
    <dbReference type="NCBI Taxonomy" id="9606"/>
    <lineage>
        <taxon>Eukaryota</taxon>
        <taxon>Metazoa</taxon>
        <taxon>Chordata</taxon>
        <taxon>Craniata</taxon>
        <taxon>Vertebrata</taxon>
        <taxon>Euteleostomi</taxon>
        <taxon>Mammalia</taxon>
        <taxon>Eutheria</taxon>
        <taxon>Euarchontoglires</taxon>
        <taxon>Primates</taxon>
        <taxon>Haplorrhini</taxon>
        <taxon>Catarrhini</taxon>
        <taxon>Hominidae</taxon>
        <taxon>Homo</taxon>
    </lineage>
</organism>
<keyword id="KW-0002">3D-structure</keyword>
<keyword id="KW-0025">Alternative splicing</keyword>
<keyword id="KW-0963">Cytoplasm</keyword>
<keyword id="KW-0443">Lipid metabolism</keyword>
<keyword id="KW-0520">NAD</keyword>
<keyword id="KW-0560">Oxidoreductase</keyword>
<keyword id="KW-1267">Proteomics identification</keyword>
<keyword id="KW-1185">Reference proteome</keyword>
<feature type="chain" id="PRO_0000042580" description="Dehydrogenase/reductase SDR family member 6">
    <location>
        <begin position="1"/>
        <end position="245"/>
    </location>
</feature>
<feature type="active site" description="Proton acceptor" evidence="2">
    <location>
        <position position="147"/>
    </location>
</feature>
<feature type="binding site" evidence="6 18">
    <location>
        <begin position="16"/>
        <end position="18"/>
    </location>
    <ligand>
        <name>NAD(+)</name>
        <dbReference type="ChEBI" id="CHEBI:57540"/>
    </ligand>
</feature>
<feature type="binding site" evidence="6 18">
    <location>
        <position position="37"/>
    </location>
    <ligand>
        <name>NAD(+)</name>
        <dbReference type="ChEBI" id="CHEBI:57540"/>
    </ligand>
</feature>
<feature type="binding site" evidence="6 18">
    <location>
        <position position="58"/>
    </location>
    <ligand>
        <name>NAD(+)</name>
        <dbReference type="ChEBI" id="CHEBI:57540"/>
    </ligand>
</feature>
<feature type="binding site" evidence="15">
    <location>
        <position position="144"/>
    </location>
    <ligand>
        <name>substrate</name>
    </ligand>
</feature>
<feature type="binding site" evidence="6 18">
    <location>
        <position position="151"/>
    </location>
    <ligand>
        <name>NAD(+)</name>
        <dbReference type="ChEBI" id="CHEBI:57540"/>
    </ligand>
</feature>
<feature type="binding site" evidence="6 18">
    <location>
        <begin position="180"/>
        <end position="184"/>
    </location>
    <ligand>
        <name>NAD(+)</name>
        <dbReference type="ChEBI" id="CHEBI:57540"/>
    </ligand>
</feature>
<feature type="binding site" evidence="15">
    <location>
        <position position="188"/>
    </location>
    <ligand>
        <name>substrate</name>
    </ligand>
</feature>
<feature type="binding site" evidence="15">
    <location>
        <position position="205"/>
    </location>
    <ligand>
        <name>substrate</name>
    </ligand>
</feature>
<feature type="splice variant" id="VSP_039781" description="In isoform 3." evidence="11">
    <location>
        <begin position="1"/>
        <end position="101"/>
    </location>
</feature>
<feature type="splice variant" id="VSP_015859" description="In isoform 2." evidence="10 11 14">
    <original>VVNRCVYSTTKAAVIGLTKSVAADFIQQGIRCNCVCPGTVDTPSLQERIQARGNPEEARNDFLKRQKTGRFATAEEIAMLCVYLASDESAYVTGNPVIIDGGWSL</original>
    <variation>GSVSFRGLRCSYTHIIKSSAFGNRHSRDYNFKY</variation>
    <location>
        <begin position="141"/>
        <end position="245"/>
    </location>
</feature>
<feature type="sequence variant" id="VAR_023602" description="In dbSNP:rs1054707." evidence="3 4 5 9">
    <original>N</original>
    <variation>S</variation>
    <location>
        <position position="70"/>
    </location>
</feature>
<feature type="sequence conflict" description="In Ref. 4; BAF82849." evidence="15" ref="4">
    <original>E</original>
    <variation>V</variation>
    <location>
        <position position="95"/>
    </location>
</feature>
<feature type="sequence conflict" description="In Ref. 2; AAQ89200." evidence="15" ref="2">
    <original>V</original>
    <variation>L</variation>
    <location>
        <position position="161"/>
    </location>
</feature>
<feature type="sequence conflict" description="In Ref. 4; BAF82849." evidence="15" ref="4">
    <original>L</original>
    <variation>P</variation>
    <location>
        <position position="203"/>
    </location>
</feature>
<feature type="sequence conflict" description="In Ref. 6; AAH95414." evidence="15" ref="6">
    <original>A</original>
    <variation>T</variation>
    <location>
        <position position="230"/>
    </location>
</feature>
<feature type="turn" evidence="19">
    <location>
        <begin position="3"/>
        <end position="6"/>
    </location>
</feature>
<feature type="strand" evidence="19">
    <location>
        <begin position="8"/>
        <end position="13"/>
    </location>
</feature>
<feature type="helix" evidence="19">
    <location>
        <begin position="17"/>
        <end position="28"/>
    </location>
</feature>
<feature type="strand" evidence="19">
    <location>
        <begin position="32"/>
        <end position="38"/>
    </location>
</feature>
<feature type="helix" evidence="19">
    <location>
        <begin position="40"/>
        <end position="43"/>
    </location>
</feature>
<feature type="helix" evidence="19">
    <location>
        <begin position="44"/>
        <end position="48"/>
    </location>
</feature>
<feature type="strand" evidence="19">
    <location>
        <begin position="52"/>
        <end position="56"/>
    </location>
</feature>
<feature type="helix" evidence="19">
    <location>
        <begin position="62"/>
        <end position="71"/>
    </location>
</feature>
<feature type="strand" evidence="19">
    <location>
        <begin position="76"/>
        <end position="80"/>
    </location>
</feature>
<feature type="helix" evidence="19">
    <location>
        <begin position="90"/>
        <end position="92"/>
    </location>
</feature>
<feature type="helix" evidence="19">
    <location>
        <begin position="95"/>
        <end position="105"/>
    </location>
</feature>
<feature type="helix" evidence="19">
    <location>
        <begin position="107"/>
        <end position="123"/>
    </location>
</feature>
<feature type="strand" evidence="19">
    <location>
        <begin position="126"/>
        <end position="131"/>
    </location>
</feature>
<feature type="turn" evidence="19">
    <location>
        <begin position="136"/>
        <end position="138"/>
    </location>
</feature>
<feature type="helix" evidence="19">
    <location>
        <begin position="145"/>
        <end position="165"/>
    </location>
</feature>
<feature type="helix" evidence="19">
    <location>
        <begin position="166"/>
        <end position="168"/>
    </location>
</feature>
<feature type="strand" evidence="19">
    <location>
        <begin position="170"/>
        <end position="178"/>
    </location>
</feature>
<feature type="helix" evidence="19">
    <location>
        <begin position="183"/>
        <end position="191"/>
    </location>
</feature>
<feature type="strand" evidence="19">
    <location>
        <begin position="192"/>
        <end position="194"/>
    </location>
</feature>
<feature type="helix" evidence="19">
    <location>
        <begin position="195"/>
        <end position="204"/>
    </location>
</feature>
<feature type="helix" evidence="19">
    <location>
        <begin position="214"/>
        <end position="225"/>
    </location>
</feature>
<feature type="helix" evidence="19">
    <location>
        <begin position="227"/>
        <end position="229"/>
    </location>
</feature>
<feature type="strand" evidence="19">
    <location>
        <begin position="236"/>
        <end position="239"/>
    </location>
</feature>
<feature type="helix" evidence="19">
    <location>
        <begin position="243"/>
        <end position="245"/>
    </location>
</feature>
<dbReference type="EC" id="1.1.1.-" evidence="15"/>
<dbReference type="EC" id="1.1.1.30" evidence="6"/>
<dbReference type="EC" id="1.1.1.104" evidence="8"/>
<dbReference type="EMBL" id="AF164790">
    <property type="protein sequence ID" value="AAF80754.1"/>
    <property type="molecule type" value="mRNA"/>
</dbReference>
<dbReference type="EMBL" id="AY358841">
    <property type="protein sequence ID" value="AAQ89200.1"/>
    <property type="molecule type" value="mRNA"/>
</dbReference>
<dbReference type="EMBL" id="CR457309">
    <property type="protein sequence ID" value="CAG33590.1"/>
    <property type="molecule type" value="mRNA"/>
</dbReference>
<dbReference type="EMBL" id="AK023323">
    <property type="protein sequence ID" value="BAB14526.1"/>
    <property type="molecule type" value="mRNA"/>
</dbReference>
<dbReference type="EMBL" id="AK290160">
    <property type="protein sequence ID" value="BAF82849.1"/>
    <property type="molecule type" value="mRNA"/>
</dbReference>
<dbReference type="EMBL" id="AK300626">
    <property type="protein sequence ID" value="BAG62318.1"/>
    <property type="molecule type" value="mRNA"/>
</dbReference>
<dbReference type="EMBL" id="AC097485">
    <property type="status" value="NOT_ANNOTATED_CDS"/>
    <property type="molecule type" value="Genomic_DNA"/>
</dbReference>
<dbReference type="EMBL" id="BC037277">
    <property type="protein sequence ID" value="AAH37277.1"/>
    <property type="molecule type" value="mRNA"/>
</dbReference>
<dbReference type="EMBL" id="BC001953">
    <property type="protein sequence ID" value="AAH01953.1"/>
    <property type="molecule type" value="mRNA"/>
</dbReference>
<dbReference type="EMBL" id="BC095414">
    <property type="protein sequence ID" value="AAH95414.1"/>
    <property type="molecule type" value="mRNA"/>
</dbReference>
<dbReference type="CCDS" id="CCDS3663.1">
    <molecule id="Q9BUT1-1"/>
</dbReference>
<dbReference type="RefSeq" id="NP_064524.3">
    <molecule id="Q9BUT1-1"/>
    <property type="nucleotide sequence ID" value="NM_020139.3"/>
</dbReference>
<dbReference type="RefSeq" id="XP_011530430.1">
    <property type="nucleotide sequence ID" value="XM_011532128.2"/>
</dbReference>
<dbReference type="RefSeq" id="XP_016863951.1">
    <property type="nucleotide sequence ID" value="XM_017008462.1"/>
</dbReference>
<dbReference type="RefSeq" id="XP_047271939.1">
    <molecule id="Q9BUT1-1"/>
    <property type="nucleotide sequence ID" value="XM_047415983.1"/>
</dbReference>
<dbReference type="RefSeq" id="XP_047271940.1">
    <molecule id="Q9BUT1-1"/>
    <property type="nucleotide sequence ID" value="XM_047415984.1"/>
</dbReference>
<dbReference type="RefSeq" id="XP_047271942.1">
    <molecule id="Q9BUT1-2"/>
    <property type="nucleotide sequence ID" value="XM_047415986.1"/>
</dbReference>
<dbReference type="RefSeq" id="XP_054206518.1">
    <molecule id="Q9BUT1-1"/>
    <property type="nucleotide sequence ID" value="XM_054350543.1"/>
</dbReference>
<dbReference type="RefSeq" id="XP_054206519.1">
    <molecule id="Q9BUT1-1"/>
    <property type="nucleotide sequence ID" value="XM_054350544.1"/>
</dbReference>
<dbReference type="RefSeq" id="XP_054206522.1">
    <molecule id="Q9BUT1-2"/>
    <property type="nucleotide sequence ID" value="XM_054350547.1"/>
</dbReference>
<dbReference type="PDB" id="2AG5">
    <property type="method" value="X-ray"/>
    <property type="resolution" value="1.84 A"/>
    <property type="chains" value="A/B/C/D=1-245"/>
</dbReference>
<dbReference type="PDBsum" id="2AG5"/>
<dbReference type="SMR" id="Q9BUT1"/>
<dbReference type="BioGRID" id="121228">
    <property type="interactions" value="47"/>
</dbReference>
<dbReference type="FunCoup" id="Q9BUT1">
    <property type="interactions" value="316"/>
</dbReference>
<dbReference type="IntAct" id="Q9BUT1">
    <property type="interactions" value="31"/>
</dbReference>
<dbReference type="MINT" id="Q9BUT1"/>
<dbReference type="STRING" id="9606.ENSP00000296424"/>
<dbReference type="ChEMBL" id="CHEMBL5169190"/>
<dbReference type="GlyGen" id="Q9BUT1">
    <property type="glycosylation" value="2 sites, 1 N-linked glycan (1 site), 1 O-linked glycan (1 site)"/>
</dbReference>
<dbReference type="iPTMnet" id="Q9BUT1"/>
<dbReference type="PhosphoSitePlus" id="Q9BUT1"/>
<dbReference type="BioMuta" id="BDH2"/>
<dbReference type="DMDM" id="125987797"/>
<dbReference type="jPOST" id="Q9BUT1"/>
<dbReference type="MassIVE" id="Q9BUT1"/>
<dbReference type="PaxDb" id="9606-ENSP00000296424"/>
<dbReference type="PeptideAtlas" id="Q9BUT1"/>
<dbReference type="ProteomicsDB" id="79125">
    <molecule id="Q9BUT1-1"/>
</dbReference>
<dbReference type="ProteomicsDB" id="79126">
    <molecule id="Q9BUT1-2"/>
</dbReference>
<dbReference type="ProteomicsDB" id="79127">
    <molecule id="Q9BUT1-3"/>
</dbReference>
<dbReference type="Pumba" id="Q9BUT1"/>
<dbReference type="Antibodypedia" id="26090">
    <property type="antibodies" value="207 antibodies from 27 providers"/>
</dbReference>
<dbReference type="DNASU" id="56898"/>
<dbReference type="Ensembl" id="ENST00000296424.9">
    <molecule id="Q9BUT1-1"/>
    <property type="protein sequence ID" value="ENSP00000296424.4"/>
    <property type="gene ID" value="ENSG00000164039.15"/>
</dbReference>
<dbReference type="GeneID" id="56898"/>
<dbReference type="KEGG" id="hsa:56898"/>
<dbReference type="MANE-Select" id="ENST00000296424.9">
    <property type="protein sequence ID" value="ENSP00000296424.4"/>
    <property type="RefSeq nucleotide sequence ID" value="NM_020139.4"/>
    <property type="RefSeq protein sequence ID" value="NP_064524.3"/>
</dbReference>
<dbReference type="UCSC" id="uc003hwz.4">
    <molecule id="Q9BUT1-1"/>
    <property type="organism name" value="human"/>
</dbReference>
<dbReference type="AGR" id="HGNC:32389"/>
<dbReference type="CTD" id="56898"/>
<dbReference type="DisGeNET" id="56898"/>
<dbReference type="GeneCards" id="BDH2"/>
<dbReference type="HGNC" id="HGNC:32389">
    <property type="gene designation" value="BDH2"/>
</dbReference>
<dbReference type="HPA" id="ENSG00000164039">
    <property type="expression patterns" value="Tissue enhanced (kidney)"/>
</dbReference>
<dbReference type="neXtProt" id="NX_Q9BUT1"/>
<dbReference type="OpenTargets" id="ENSG00000164039"/>
<dbReference type="PharmGKB" id="PA142672559"/>
<dbReference type="VEuPathDB" id="HostDB:ENSG00000164039"/>
<dbReference type="eggNOG" id="KOG0725">
    <property type="taxonomic scope" value="Eukaryota"/>
</dbReference>
<dbReference type="GeneTree" id="ENSGT00940000156721"/>
<dbReference type="HOGENOM" id="CLU_010194_1_0_1"/>
<dbReference type="InParanoid" id="Q9BUT1"/>
<dbReference type="OMA" id="YMTGTDF"/>
<dbReference type="OrthoDB" id="47007at2759"/>
<dbReference type="PAN-GO" id="Q9BUT1">
    <property type="GO annotations" value="4 GO annotations based on evolutionary models"/>
</dbReference>
<dbReference type="PhylomeDB" id="Q9BUT1"/>
<dbReference type="TreeFam" id="TF328795"/>
<dbReference type="BioCyc" id="MetaCyc:HS08987-MONOMER"/>
<dbReference type="PathwayCommons" id="Q9BUT1"/>
<dbReference type="Reactome" id="R-HSA-77111">
    <property type="pathway name" value="Synthesis of Ketone Bodies"/>
</dbReference>
<dbReference type="SABIO-RK" id="Q9BUT1"/>
<dbReference type="SignaLink" id="Q9BUT1"/>
<dbReference type="BioGRID-ORCS" id="56898">
    <property type="hits" value="16 hits in 1146 CRISPR screens"/>
</dbReference>
<dbReference type="ChiTaRS" id="BDH2">
    <property type="organism name" value="human"/>
</dbReference>
<dbReference type="EvolutionaryTrace" id="Q9BUT1"/>
<dbReference type="GenomeRNAi" id="56898"/>
<dbReference type="Pharos" id="Q9BUT1">
    <property type="development level" value="Tbio"/>
</dbReference>
<dbReference type="PRO" id="PR:Q9BUT1"/>
<dbReference type="Proteomes" id="UP000005640">
    <property type="component" value="Chromosome 4"/>
</dbReference>
<dbReference type="RNAct" id="Q9BUT1">
    <property type="molecule type" value="protein"/>
</dbReference>
<dbReference type="Bgee" id="ENSG00000164039">
    <property type="expression patterns" value="Expressed in mucosa of stomach and 124 other cell types or tissues"/>
</dbReference>
<dbReference type="ExpressionAtlas" id="Q9BUT1">
    <property type="expression patterns" value="baseline and differential"/>
</dbReference>
<dbReference type="GO" id="GO:0005737">
    <property type="term" value="C:cytoplasm"/>
    <property type="evidence" value="ECO:0000314"/>
    <property type="project" value="HGNC-UCL"/>
</dbReference>
<dbReference type="GO" id="GO:0005829">
    <property type="term" value="C:cytosol"/>
    <property type="evidence" value="ECO:0000314"/>
    <property type="project" value="HPA"/>
</dbReference>
<dbReference type="GO" id="GO:0070062">
    <property type="term" value="C:extracellular exosome"/>
    <property type="evidence" value="ECO:0007005"/>
    <property type="project" value="UniProtKB"/>
</dbReference>
<dbReference type="GO" id="GO:0003858">
    <property type="term" value="F:3-hydroxybutyrate dehydrogenase activity"/>
    <property type="evidence" value="ECO:0000314"/>
    <property type="project" value="HGNC-UCL"/>
</dbReference>
<dbReference type="GO" id="GO:0016617">
    <property type="term" value="F:4-oxoproline reductase activity"/>
    <property type="evidence" value="ECO:0007669"/>
    <property type="project" value="RHEA"/>
</dbReference>
<dbReference type="GO" id="GO:0051287">
    <property type="term" value="F:NAD binding"/>
    <property type="evidence" value="ECO:0000314"/>
    <property type="project" value="HGNC-UCL"/>
</dbReference>
<dbReference type="GO" id="GO:0016628">
    <property type="term" value="F:oxidoreductase activity, acting on the CH-CH group of donors, NAD or NADP as acceptor"/>
    <property type="evidence" value="ECO:0000250"/>
    <property type="project" value="UniProtKB"/>
</dbReference>
<dbReference type="GO" id="GO:0030855">
    <property type="term" value="P:epithelial cell differentiation"/>
    <property type="evidence" value="ECO:0000314"/>
    <property type="project" value="UniProtKB"/>
</dbReference>
<dbReference type="GO" id="GO:0006635">
    <property type="term" value="P:fatty acid beta-oxidation"/>
    <property type="evidence" value="ECO:0000314"/>
    <property type="project" value="HGNC-UCL"/>
</dbReference>
<dbReference type="GO" id="GO:0042168">
    <property type="term" value="P:heme metabolic process"/>
    <property type="evidence" value="ECO:0000250"/>
    <property type="project" value="UniProtKB"/>
</dbReference>
<dbReference type="GO" id="GO:0019290">
    <property type="term" value="P:siderophore biosynthetic process"/>
    <property type="evidence" value="ECO:0000250"/>
    <property type="project" value="UniProtKB"/>
</dbReference>
<dbReference type="CDD" id="cd05368">
    <property type="entry name" value="DHRS6_like_SDR_c"/>
    <property type="match status" value="1"/>
</dbReference>
<dbReference type="FunFam" id="3.40.50.720:FF:000211">
    <property type="entry name" value="3-hydroxybutyrate dehydrogenase type 2"/>
    <property type="match status" value="1"/>
</dbReference>
<dbReference type="Gene3D" id="3.40.50.720">
    <property type="entry name" value="NAD(P)-binding Rossmann-like Domain"/>
    <property type="match status" value="1"/>
</dbReference>
<dbReference type="InterPro" id="IPR036291">
    <property type="entry name" value="NAD(P)-bd_dom_sf"/>
</dbReference>
<dbReference type="InterPro" id="IPR020904">
    <property type="entry name" value="Sc_DH/Rdtase_CS"/>
</dbReference>
<dbReference type="InterPro" id="IPR002347">
    <property type="entry name" value="SDR_fam"/>
</dbReference>
<dbReference type="InterPro" id="IPR051122">
    <property type="entry name" value="SDR_superfamily_enzyme"/>
</dbReference>
<dbReference type="PANTHER" id="PTHR43477:SF4">
    <property type="entry name" value="DEHYDROGENASE_REDUCTASE SDR FAMILY MEMBER 6"/>
    <property type="match status" value="1"/>
</dbReference>
<dbReference type="PANTHER" id="PTHR43477">
    <property type="entry name" value="DIHYDROANTICAPSIN 7-DEHYDROGENASE"/>
    <property type="match status" value="1"/>
</dbReference>
<dbReference type="Pfam" id="PF13561">
    <property type="entry name" value="adh_short_C2"/>
    <property type="match status" value="1"/>
</dbReference>
<dbReference type="PRINTS" id="PR00081">
    <property type="entry name" value="GDHRDH"/>
</dbReference>
<dbReference type="PRINTS" id="PR00080">
    <property type="entry name" value="SDRFAMILY"/>
</dbReference>
<dbReference type="SUPFAM" id="SSF51735">
    <property type="entry name" value="NAD(P)-binding Rossmann-fold domains"/>
    <property type="match status" value="1"/>
</dbReference>
<dbReference type="PROSITE" id="PS00061">
    <property type="entry name" value="ADH_SHORT"/>
    <property type="match status" value="1"/>
</dbReference>
<comment type="function">
    <text evidence="1 6 8">NAD(H)-dependent dehydrogenase/reductase with a preference for cyclic substrates (By similarity) (PubMed:35150746). Catalyzes stereoselective conversion of 4-oxo-L-proline to cis-4-hydroxy-L-proline, likely a detoxification mechanism for ketoprolines (PubMed:35150746). Mediates the formation of 2,5-dihydroxybenzoate (2,5-DHBA), a siderophore that chelates free cytoplasmic iron and associates with LCN2, thereby regulating iron transport and homeostasis while protecting cells against free radical-induced oxidative stress. The iron-siderophore complex is imported into mitochondria, providing an iron source for mitochondrial metabolic processes in particular heme synthesis (By similarity). May act as a 3-hydroxybutyrate dehydrogenase (PubMed:16380372).</text>
</comment>
<comment type="catalytic activity">
    <reaction evidence="8">
        <text>cis-4-hydroxy-L-proline + NAD(+) = 4-oxo-L-proline + NADH + H(+)</text>
        <dbReference type="Rhea" id="RHEA:13601"/>
        <dbReference type="ChEBI" id="CHEBI:15378"/>
        <dbReference type="ChEBI" id="CHEBI:57540"/>
        <dbReference type="ChEBI" id="CHEBI:57945"/>
        <dbReference type="ChEBI" id="CHEBI:63727"/>
        <dbReference type="ChEBI" id="CHEBI:84813"/>
        <dbReference type="EC" id="1.1.1.104"/>
    </reaction>
    <physiologicalReaction direction="right-to-left" evidence="8">
        <dbReference type="Rhea" id="RHEA:13603"/>
    </physiologicalReaction>
</comment>
<comment type="catalytic activity">
    <reaction evidence="6">
        <text>(R)-3-hydroxybutanoate + NAD(+) = acetoacetate + NADH + H(+)</text>
        <dbReference type="Rhea" id="RHEA:20521"/>
        <dbReference type="ChEBI" id="CHEBI:10983"/>
        <dbReference type="ChEBI" id="CHEBI:13705"/>
        <dbReference type="ChEBI" id="CHEBI:15378"/>
        <dbReference type="ChEBI" id="CHEBI:57540"/>
        <dbReference type="ChEBI" id="CHEBI:57945"/>
        <dbReference type="EC" id="1.1.1.30"/>
    </reaction>
</comment>
<comment type="biophysicochemical properties">
    <kinetics>
        <KM evidence="8">483 uM for 4-oxo-L-proline</KM>
        <KM evidence="8">6152 uM for (R)-3-hydroxybutanoate</KM>
        <KM evidence="6">60 uM for NAD</KM>
        <KM evidence="6">9.1 mM for (R)-3-hydroxybutanoate</KM>
        <Vmax evidence="8">41.0 umol/min/mg enzyme toward 4-oxo-L-proline</Vmax>
        <Vmax evidence="8">0.04 umol/min/mg enzyme toward (R)-3-hydroxybutanoate</Vmax>
        <Vmax evidence="6">82.0 nmol/min/mg enzyme toward (R)-3-hydroxybutanoate (at 30 degrees Celsius)</Vmax>
        <text evidence="8">kcat is 19 sec(-1) for the NADH-dependent reduction of 4-oxo-L-proline. kcat is 0.02 sec(-1) for the NAD(+)-dependent oxidation of (R)-3-hydroxybutanoate.</text>
    </kinetics>
    <phDependence>
        <text evidence="6 8">Optimum pH is 7.5-9.0 with (R)-3-hydroxybutanoate and 6.5-7.0 with 4-oxo-L-proline.</text>
    </phDependence>
</comment>
<comment type="pathway">
    <text evidence="16">Amino-acid metabolism.</text>
</comment>
<comment type="pathway">
    <text evidence="1">Siderophore biosynthesis.</text>
</comment>
<comment type="subunit">
    <text evidence="6">Homotetramer.</text>
</comment>
<comment type="interaction">
    <interactant intactId="EBI-6137689">
        <id>Q9BUT1</id>
    </interactant>
    <interactant intactId="EBI-11956831">
        <id>Q13952-2</id>
        <label>NFYC</label>
    </interactant>
    <organismsDiffer>false</organismsDiffer>
    <experiments>3</experiments>
</comment>
<comment type="subcellular location">
    <subcellularLocation>
        <location evidence="6">Cytoplasm</location>
    </subcellularLocation>
</comment>
<comment type="alternative products">
    <event type="alternative splicing"/>
    <isoform>
        <id>Q9BUT1-1</id>
        <name>1</name>
        <sequence type="displayed"/>
    </isoform>
    <isoform>
        <id>Q9BUT1-2</id>
        <name>2</name>
        <sequence type="described" ref="VSP_015859"/>
    </isoform>
    <isoform>
        <id>Q9BUT1-3</id>
        <name>3</name>
        <sequence type="described" ref="VSP_039781"/>
    </isoform>
</comment>
<comment type="tissue specificity">
    <text evidence="7">Detected in liver (at protein level).</text>
</comment>
<comment type="induction">
    <text evidence="7">Induced by low iron levels, and down-regulated by elevated iron levels.</text>
</comment>
<comment type="similarity">
    <text evidence="15">Belongs to the short-chain dehydrogenases/reductases (SDR) family.</text>
</comment>
<comment type="caution">
    <text evidence="1 6 8">Postulated to act as a 3-hydroxybutyrate dehydrogenase, however its contribution to ketone body formation appears to be physiologically irrelevant since it has very low affinity for the substrate.</text>
</comment>
<proteinExistence type="evidence at protein level"/>
<sequence>MGRLDGKVIILTAAAQGIGQAAALAFAREGAKVIATDINESKLQELEKYPGIQTRVLDVTKKKQIDQFANEVERLDVLFNVAGFVHHGTVLDCEEKDWDFSMNLNVRSMYLMIKAFLPKMLAQKSGNIINMSSVASSVKGVVNRCVYSTTKAAVIGLTKSVAADFIQQGIRCNCVCPGTVDTPSLQERIQARGNPEEARNDFLKRQKTGRFATAEEIAMLCVYLASDESAYVTGNPVIIDGGWSL</sequence>
<name>DHRS6_HUMAN</name>
<reference key="1">
    <citation type="journal article" date="2000" name="Proc. Natl. Acad. Sci. U.S.A.">
        <title>Gene expression profiling in the human hypothalamus-pituitary-adrenal axis and full-length cDNA cloning.</title>
        <authorList>
            <person name="Hu R.-M."/>
            <person name="Han Z.-G."/>
            <person name="Song H.-D."/>
            <person name="Peng Y.-D."/>
            <person name="Huang Q.-H."/>
            <person name="Ren S.-X."/>
            <person name="Gu Y.-J."/>
            <person name="Huang C.-H."/>
            <person name="Li Y.-B."/>
            <person name="Jiang C.-L."/>
            <person name="Fu G."/>
            <person name="Zhang Q.-H."/>
            <person name="Gu B.-W."/>
            <person name="Dai M."/>
            <person name="Mao Y.-F."/>
            <person name="Gao G.-F."/>
            <person name="Rong R."/>
            <person name="Ye M."/>
            <person name="Zhou J."/>
            <person name="Xu S.-H."/>
            <person name="Gu J."/>
            <person name="Shi J.-X."/>
            <person name="Jin W.-R."/>
            <person name="Zhang C.-K."/>
            <person name="Wu T.-M."/>
            <person name="Huang G.-Y."/>
            <person name="Chen Z."/>
            <person name="Chen M.-D."/>
            <person name="Chen J.-L."/>
        </authorList>
    </citation>
    <scope>NUCLEOTIDE SEQUENCE [LARGE SCALE MRNA] (ISOFORM 1)</scope>
    <source>
        <tissue>Hypothalamus</tissue>
    </source>
</reference>
<reference key="2">
    <citation type="journal article" date="2003" name="Genome Res.">
        <title>The secreted protein discovery initiative (SPDI), a large-scale effort to identify novel human secreted and transmembrane proteins: a bioinformatics assessment.</title>
        <authorList>
            <person name="Clark H.F."/>
            <person name="Gurney A.L."/>
            <person name="Abaya E."/>
            <person name="Baker K."/>
            <person name="Baldwin D.T."/>
            <person name="Brush J."/>
            <person name="Chen J."/>
            <person name="Chow B."/>
            <person name="Chui C."/>
            <person name="Crowley C."/>
            <person name="Currell B."/>
            <person name="Deuel B."/>
            <person name="Dowd P."/>
            <person name="Eaton D."/>
            <person name="Foster J.S."/>
            <person name="Grimaldi C."/>
            <person name="Gu Q."/>
            <person name="Hass P.E."/>
            <person name="Heldens S."/>
            <person name="Huang A."/>
            <person name="Kim H.S."/>
            <person name="Klimowski L."/>
            <person name="Jin Y."/>
            <person name="Johnson S."/>
            <person name="Lee J."/>
            <person name="Lewis L."/>
            <person name="Liao D."/>
            <person name="Mark M.R."/>
            <person name="Robbie E."/>
            <person name="Sanchez C."/>
            <person name="Schoenfeld J."/>
            <person name="Seshagiri S."/>
            <person name="Simmons L."/>
            <person name="Singh J."/>
            <person name="Smith V."/>
            <person name="Stinson J."/>
            <person name="Vagts A."/>
            <person name="Vandlen R.L."/>
            <person name="Watanabe C."/>
            <person name="Wieand D."/>
            <person name="Woods K."/>
            <person name="Xie M.-H."/>
            <person name="Yansura D.G."/>
            <person name="Yi S."/>
            <person name="Yu G."/>
            <person name="Yuan J."/>
            <person name="Zhang M."/>
            <person name="Zhang Z."/>
            <person name="Goddard A.D."/>
            <person name="Wood W.I."/>
            <person name="Godowski P.J."/>
            <person name="Gray A.M."/>
        </authorList>
    </citation>
    <scope>NUCLEOTIDE SEQUENCE [LARGE SCALE MRNA] (ISOFORM 1)</scope>
    <scope>VARIANT SER-70</scope>
</reference>
<reference key="3">
    <citation type="submission" date="2004-06" db="EMBL/GenBank/DDBJ databases">
        <title>Cloning of human full open reading frames in Gateway(TM) system entry vector (pDONR201).</title>
        <authorList>
            <person name="Ebert L."/>
            <person name="Schick M."/>
            <person name="Neubert P."/>
            <person name="Schatten R."/>
            <person name="Henze S."/>
            <person name="Korn B."/>
        </authorList>
    </citation>
    <scope>NUCLEOTIDE SEQUENCE [LARGE SCALE MRNA] (ISOFORM 2)</scope>
    <scope>VARIANT SER-70</scope>
</reference>
<reference key="4">
    <citation type="journal article" date="2004" name="Nat. Genet.">
        <title>Complete sequencing and characterization of 21,243 full-length human cDNAs.</title>
        <authorList>
            <person name="Ota T."/>
            <person name="Suzuki Y."/>
            <person name="Nishikawa T."/>
            <person name="Otsuki T."/>
            <person name="Sugiyama T."/>
            <person name="Irie R."/>
            <person name="Wakamatsu A."/>
            <person name="Hayashi K."/>
            <person name="Sato H."/>
            <person name="Nagai K."/>
            <person name="Kimura K."/>
            <person name="Makita H."/>
            <person name="Sekine M."/>
            <person name="Obayashi M."/>
            <person name="Nishi T."/>
            <person name="Shibahara T."/>
            <person name="Tanaka T."/>
            <person name="Ishii S."/>
            <person name="Yamamoto J."/>
            <person name="Saito K."/>
            <person name="Kawai Y."/>
            <person name="Isono Y."/>
            <person name="Nakamura Y."/>
            <person name="Nagahari K."/>
            <person name="Murakami K."/>
            <person name="Yasuda T."/>
            <person name="Iwayanagi T."/>
            <person name="Wagatsuma M."/>
            <person name="Shiratori A."/>
            <person name="Sudo H."/>
            <person name="Hosoiri T."/>
            <person name="Kaku Y."/>
            <person name="Kodaira H."/>
            <person name="Kondo H."/>
            <person name="Sugawara M."/>
            <person name="Takahashi M."/>
            <person name="Kanda K."/>
            <person name="Yokoi T."/>
            <person name="Furuya T."/>
            <person name="Kikkawa E."/>
            <person name="Omura Y."/>
            <person name="Abe K."/>
            <person name="Kamihara K."/>
            <person name="Katsuta N."/>
            <person name="Sato K."/>
            <person name="Tanikawa M."/>
            <person name="Yamazaki M."/>
            <person name="Ninomiya K."/>
            <person name="Ishibashi T."/>
            <person name="Yamashita H."/>
            <person name="Murakawa K."/>
            <person name="Fujimori K."/>
            <person name="Tanai H."/>
            <person name="Kimata M."/>
            <person name="Watanabe M."/>
            <person name="Hiraoka S."/>
            <person name="Chiba Y."/>
            <person name="Ishida S."/>
            <person name="Ono Y."/>
            <person name="Takiguchi S."/>
            <person name="Watanabe S."/>
            <person name="Yosida M."/>
            <person name="Hotuta T."/>
            <person name="Kusano J."/>
            <person name="Kanehori K."/>
            <person name="Takahashi-Fujii A."/>
            <person name="Hara H."/>
            <person name="Tanase T.-O."/>
            <person name="Nomura Y."/>
            <person name="Togiya S."/>
            <person name="Komai F."/>
            <person name="Hara R."/>
            <person name="Takeuchi K."/>
            <person name="Arita M."/>
            <person name="Imose N."/>
            <person name="Musashino K."/>
            <person name="Yuuki H."/>
            <person name="Oshima A."/>
            <person name="Sasaki N."/>
            <person name="Aotsuka S."/>
            <person name="Yoshikawa Y."/>
            <person name="Matsunawa H."/>
            <person name="Ichihara T."/>
            <person name="Shiohata N."/>
            <person name="Sano S."/>
            <person name="Moriya S."/>
            <person name="Momiyama H."/>
            <person name="Satoh N."/>
            <person name="Takami S."/>
            <person name="Terashima Y."/>
            <person name="Suzuki O."/>
            <person name="Nakagawa S."/>
            <person name="Senoh A."/>
            <person name="Mizoguchi H."/>
            <person name="Goto Y."/>
            <person name="Shimizu F."/>
            <person name="Wakebe H."/>
            <person name="Hishigaki H."/>
            <person name="Watanabe T."/>
            <person name="Sugiyama A."/>
            <person name="Takemoto M."/>
            <person name="Kawakami B."/>
            <person name="Yamazaki M."/>
            <person name="Watanabe K."/>
            <person name="Kumagai A."/>
            <person name="Itakura S."/>
            <person name="Fukuzumi Y."/>
            <person name="Fujimori Y."/>
            <person name="Komiyama M."/>
            <person name="Tashiro H."/>
            <person name="Tanigami A."/>
            <person name="Fujiwara T."/>
            <person name="Ono T."/>
            <person name="Yamada K."/>
            <person name="Fujii Y."/>
            <person name="Ozaki K."/>
            <person name="Hirao M."/>
            <person name="Ohmori Y."/>
            <person name="Kawabata A."/>
            <person name="Hikiji T."/>
            <person name="Kobatake N."/>
            <person name="Inagaki H."/>
            <person name="Ikema Y."/>
            <person name="Okamoto S."/>
            <person name="Okitani R."/>
            <person name="Kawakami T."/>
            <person name="Noguchi S."/>
            <person name="Itoh T."/>
            <person name="Shigeta K."/>
            <person name="Senba T."/>
            <person name="Matsumura K."/>
            <person name="Nakajima Y."/>
            <person name="Mizuno T."/>
            <person name="Morinaga M."/>
            <person name="Sasaki M."/>
            <person name="Togashi T."/>
            <person name="Oyama M."/>
            <person name="Hata H."/>
            <person name="Watanabe M."/>
            <person name="Komatsu T."/>
            <person name="Mizushima-Sugano J."/>
            <person name="Satoh T."/>
            <person name="Shirai Y."/>
            <person name="Takahashi Y."/>
            <person name="Nakagawa K."/>
            <person name="Okumura K."/>
            <person name="Nagase T."/>
            <person name="Nomura N."/>
            <person name="Kikuchi H."/>
            <person name="Masuho Y."/>
            <person name="Yamashita R."/>
            <person name="Nakai K."/>
            <person name="Yada T."/>
            <person name="Nakamura Y."/>
            <person name="Ohara O."/>
            <person name="Isogai T."/>
            <person name="Sugano S."/>
        </authorList>
    </citation>
    <scope>NUCLEOTIDE SEQUENCE [LARGE SCALE MRNA] (ISOFORMS 1 AND 2)</scope>
    <scope>VARIANT SER-70</scope>
    <source>
        <tissue>Ovary</tissue>
        <tissue>Thalamus</tissue>
    </source>
</reference>
<reference key="5">
    <citation type="journal article" date="2005" name="Nature">
        <title>Generation and annotation of the DNA sequences of human chromosomes 2 and 4.</title>
        <authorList>
            <person name="Hillier L.W."/>
            <person name="Graves T.A."/>
            <person name="Fulton R.S."/>
            <person name="Fulton L.A."/>
            <person name="Pepin K.H."/>
            <person name="Minx P."/>
            <person name="Wagner-McPherson C."/>
            <person name="Layman D."/>
            <person name="Wylie K."/>
            <person name="Sekhon M."/>
            <person name="Becker M.C."/>
            <person name="Fewell G.A."/>
            <person name="Delehaunty K.D."/>
            <person name="Miner T.L."/>
            <person name="Nash W.E."/>
            <person name="Kremitzki C."/>
            <person name="Oddy L."/>
            <person name="Du H."/>
            <person name="Sun H."/>
            <person name="Bradshaw-Cordum H."/>
            <person name="Ali J."/>
            <person name="Carter J."/>
            <person name="Cordes M."/>
            <person name="Harris A."/>
            <person name="Isak A."/>
            <person name="van Brunt A."/>
            <person name="Nguyen C."/>
            <person name="Du F."/>
            <person name="Courtney L."/>
            <person name="Kalicki J."/>
            <person name="Ozersky P."/>
            <person name="Abbott S."/>
            <person name="Armstrong J."/>
            <person name="Belter E.A."/>
            <person name="Caruso L."/>
            <person name="Cedroni M."/>
            <person name="Cotton M."/>
            <person name="Davidson T."/>
            <person name="Desai A."/>
            <person name="Elliott G."/>
            <person name="Erb T."/>
            <person name="Fronick C."/>
            <person name="Gaige T."/>
            <person name="Haakenson W."/>
            <person name="Haglund K."/>
            <person name="Holmes A."/>
            <person name="Harkins R."/>
            <person name="Kim K."/>
            <person name="Kruchowski S.S."/>
            <person name="Strong C.M."/>
            <person name="Grewal N."/>
            <person name="Goyea E."/>
            <person name="Hou S."/>
            <person name="Levy A."/>
            <person name="Martinka S."/>
            <person name="Mead K."/>
            <person name="McLellan M.D."/>
            <person name="Meyer R."/>
            <person name="Randall-Maher J."/>
            <person name="Tomlinson C."/>
            <person name="Dauphin-Kohlberg S."/>
            <person name="Kozlowicz-Reilly A."/>
            <person name="Shah N."/>
            <person name="Swearengen-Shahid S."/>
            <person name="Snider J."/>
            <person name="Strong J.T."/>
            <person name="Thompson J."/>
            <person name="Yoakum M."/>
            <person name="Leonard S."/>
            <person name="Pearman C."/>
            <person name="Trani L."/>
            <person name="Radionenko M."/>
            <person name="Waligorski J.E."/>
            <person name="Wang C."/>
            <person name="Rock S.M."/>
            <person name="Tin-Wollam A.-M."/>
            <person name="Maupin R."/>
            <person name="Latreille P."/>
            <person name="Wendl M.C."/>
            <person name="Yang S.-P."/>
            <person name="Pohl C."/>
            <person name="Wallis J.W."/>
            <person name="Spieth J."/>
            <person name="Bieri T.A."/>
            <person name="Berkowicz N."/>
            <person name="Nelson J.O."/>
            <person name="Osborne J."/>
            <person name="Ding L."/>
            <person name="Meyer R."/>
            <person name="Sabo A."/>
            <person name="Shotland Y."/>
            <person name="Sinha P."/>
            <person name="Wohldmann P.E."/>
            <person name="Cook L.L."/>
            <person name="Hickenbotham M.T."/>
            <person name="Eldred J."/>
            <person name="Williams D."/>
            <person name="Jones T.A."/>
            <person name="She X."/>
            <person name="Ciccarelli F.D."/>
            <person name="Izaurralde E."/>
            <person name="Taylor J."/>
            <person name="Schmutz J."/>
            <person name="Myers R.M."/>
            <person name="Cox D.R."/>
            <person name="Huang X."/>
            <person name="McPherson J.D."/>
            <person name="Mardis E.R."/>
            <person name="Clifton S.W."/>
            <person name="Warren W.C."/>
            <person name="Chinwalla A.T."/>
            <person name="Eddy S.R."/>
            <person name="Marra M.A."/>
            <person name="Ovcharenko I."/>
            <person name="Furey T.S."/>
            <person name="Miller W."/>
            <person name="Eichler E.E."/>
            <person name="Bork P."/>
            <person name="Suyama M."/>
            <person name="Torrents D."/>
            <person name="Waterston R.H."/>
            <person name="Wilson R.K."/>
        </authorList>
    </citation>
    <scope>NUCLEOTIDE SEQUENCE [LARGE SCALE GENOMIC DNA]</scope>
</reference>
<reference key="6">
    <citation type="journal article" date="2004" name="Genome Res.">
        <title>The status, quality, and expansion of the NIH full-length cDNA project: the Mammalian Gene Collection (MGC).</title>
        <authorList>
            <consortium name="The MGC Project Team"/>
        </authorList>
    </citation>
    <scope>NUCLEOTIDE SEQUENCE [LARGE SCALE MRNA] (ISOFORMS 1; 2 AND 3)</scope>
    <scope>VARIANT SER-70</scope>
    <source>
        <tissue>Brain</tissue>
        <tissue>Skin</tissue>
    </source>
</reference>
<reference key="7">
    <citation type="journal article" date="2011" name="BMC Syst. Biol.">
        <title>Initial characterization of the human central proteome.</title>
        <authorList>
            <person name="Burkard T.R."/>
            <person name="Planyavsky M."/>
            <person name="Kaupe I."/>
            <person name="Breitwieser F.P."/>
            <person name="Buerckstuemmer T."/>
            <person name="Bennett K.L."/>
            <person name="Superti-Furga G."/>
            <person name="Colinge J."/>
        </authorList>
    </citation>
    <scope>IDENTIFICATION BY MASS SPECTROMETRY [LARGE SCALE ANALYSIS]</scope>
</reference>
<reference key="8">
    <citation type="journal article" date="2012" name="J. Mol. Med.">
        <title>Siderophore-mediated iron trafficking in humans is regulated by iron.</title>
        <authorList>
            <person name="Liu Z."/>
            <person name="Lanford R."/>
            <person name="Mueller S."/>
            <person name="Gerhard G.S."/>
            <person name="Luscieti S."/>
            <person name="Sanchez M."/>
            <person name="Devireddy L."/>
        </authorList>
    </citation>
    <scope>TISSUE SPECIFICITY</scope>
    <scope>INDUCTION BY IRON</scope>
</reference>
<reference key="9">
    <citation type="journal article" date="2022" name="J. Biol. Chem.">
        <title>Recharacterization of the Mammalian Cytosolic Type 2 (R)-beta-Hydroxybutyrate Dehydrogenase (BDH2) as 4-Oxo-L-Proline Reductase (EC 1.1.1.104).</title>
        <authorList>
            <person name="Kwiatkowski S."/>
            <person name="Bozko M."/>
            <person name="Zarod M."/>
            <person name="Witecka A."/>
            <person name="Kocdemir K."/>
            <person name="Jagielski A.K."/>
            <person name="Drozak J."/>
        </authorList>
    </citation>
    <scope>FUNCTION</scope>
    <scope>CATALYTIC ACTIVITY</scope>
    <scope>BIOPHYSICOCHEMICAL PROPERTIES</scope>
    <scope>PATHWAY</scope>
</reference>
<reference key="10">
    <citation type="journal article" date="2006" name="J. Biol. Chem.">
        <title>Characterization of human DHRS6, an orphan short chain dehydrogenase/reductase enzyme: a novel, cytosolic type 2 R-beta-hydroxybutyrate dehydrogenase.</title>
        <authorList>
            <person name="Guo K."/>
            <person name="Lukacik P."/>
            <person name="Papagrigoriou E."/>
            <person name="Meier M."/>
            <person name="Lee W.H."/>
            <person name="Adamski J."/>
            <person name="Oppermann U."/>
        </authorList>
    </citation>
    <scope>X-RAY CRYSTALLOGRAPHY (1.84 ANGSTROMS) IN COMPLEX WITH NAD</scope>
    <scope>FUNCTION</scope>
    <scope>CATALYTIC ACTIVITY</scope>
    <scope>BIOPHYSICOCHEMICAL PROPERTIES</scope>
    <scope>IDENTIFICATION BY MASS SPECTROMETRY</scope>
    <scope>SUBCELLULAR LOCATION</scope>
    <scope>SUBUNIT</scope>
</reference>
<gene>
    <name evidence="13 17" type="primary">BDH2</name>
    <name evidence="12" type="synonym">DHRS6</name>
    <name type="synonym">SDR15C1</name>
    <name type="ORF">UNQ6308/PRO20933</name>
</gene>
<evidence type="ECO:0000250" key="1">
    <source>
        <dbReference type="UniProtKB" id="Q8JZV9"/>
    </source>
</evidence>
<evidence type="ECO:0000255" key="2">
    <source>
        <dbReference type="PROSITE-ProRule" id="PRU10001"/>
    </source>
</evidence>
<evidence type="ECO:0000269" key="3">
    <source>
    </source>
</evidence>
<evidence type="ECO:0000269" key="4">
    <source>
    </source>
</evidence>
<evidence type="ECO:0000269" key="5">
    <source>
    </source>
</evidence>
<evidence type="ECO:0000269" key="6">
    <source>
    </source>
</evidence>
<evidence type="ECO:0000269" key="7">
    <source>
    </source>
</evidence>
<evidence type="ECO:0000269" key="8">
    <source>
    </source>
</evidence>
<evidence type="ECO:0000269" key="9">
    <source ref="3"/>
</evidence>
<evidence type="ECO:0000303" key="10">
    <source>
    </source>
</evidence>
<evidence type="ECO:0000303" key="11">
    <source>
    </source>
</evidence>
<evidence type="ECO:0000303" key="12">
    <source>
    </source>
</evidence>
<evidence type="ECO:0000303" key="13">
    <source>
    </source>
</evidence>
<evidence type="ECO:0000303" key="14">
    <source ref="3"/>
</evidence>
<evidence type="ECO:0000305" key="15"/>
<evidence type="ECO:0000305" key="16">
    <source>
    </source>
</evidence>
<evidence type="ECO:0000312" key="17">
    <source>
        <dbReference type="HGNC" id="HGNC:32389"/>
    </source>
</evidence>
<evidence type="ECO:0007744" key="18">
    <source>
        <dbReference type="PDB" id="2AG5"/>
    </source>
</evidence>
<evidence type="ECO:0007829" key="19">
    <source>
        <dbReference type="PDB" id="2AG5"/>
    </source>
</evidence>
<accession>Q9BUT1</accession>
<accession>A8K295</accession>
<accession>B4DUF6</accession>
<accession>Q503A0</accession>
<accession>Q6IA46</accession>
<accession>Q6UWD3</accession>
<accession>Q9H8S8</accession>
<accession>Q9NRX8</accession>